<dbReference type="EMBL" id="LT607733">
    <property type="protein sequence ID" value="SCG13989.1"/>
    <property type="molecule type" value="Genomic_DNA"/>
</dbReference>
<dbReference type="SMR" id="A0A1C5G2D0"/>
<dbReference type="Proteomes" id="UP000198251">
    <property type="component" value="Chromosome i"/>
</dbReference>
<dbReference type="GO" id="GO:0005886">
    <property type="term" value="C:plasma membrane"/>
    <property type="evidence" value="ECO:0007669"/>
    <property type="project" value="UniProtKB-SubCell"/>
</dbReference>
<dbReference type="GO" id="GO:0000166">
    <property type="term" value="F:nucleotide binding"/>
    <property type="evidence" value="ECO:0007669"/>
    <property type="project" value="UniProtKB-KW"/>
</dbReference>
<dbReference type="GO" id="GO:0051607">
    <property type="term" value="P:defense response to virus"/>
    <property type="evidence" value="ECO:0007669"/>
    <property type="project" value="UniProtKB-KW"/>
</dbReference>
<dbReference type="InterPro" id="IPR043760">
    <property type="entry name" value="PycTM"/>
</dbReference>
<dbReference type="Pfam" id="PF18967">
    <property type="entry name" value="PycTM"/>
    <property type="match status" value="1"/>
</dbReference>
<reference key="1">
    <citation type="submission" date="2016-06" db="EMBL/GenBank/DDBJ databases">
        <authorList>
            <person name="Varghese N."/>
        </authorList>
    </citation>
    <scope>NUCLEOTIDE SEQUENCE [LARGE SCALE GENOMIC DNA]</scope>
    <source>
        <strain>DSM 43913 / CIP 108946 / JCM 3327 / NBRC 14267 / 71-m68</strain>
    </source>
</reference>
<reference key="2">
    <citation type="journal article" date="2021" name="Cell">
        <title>Cyclic CMP and cyclic UMP mediate bacterial immunity against phages.</title>
        <authorList>
            <person name="Tal N."/>
            <person name="Morehouse B.R."/>
            <person name="Millman A."/>
            <person name="Stokar-Avihail A."/>
            <person name="Avraham C."/>
            <person name="Fedorenko T."/>
            <person name="Yirmiya E."/>
            <person name="Herbst E."/>
            <person name="Brandis A."/>
            <person name="Mehlman T."/>
            <person name="Oppenheimer-Shaanan Y."/>
            <person name="Keszei A.F.A."/>
            <person name="Shao S."/>
            <person name="Amitai G."/>
            <person name="Kranzusch P.J."/>
            <person name="Sorek R."/>
        </authorList>
    </citation>
    <scope>PROBABLE FUNCTION</scope>
    <scope>CLASSIFICATION</scope>
    <source>
        <strain>DSM 43913 / CIP 108946 / JCM 3327 / NBRC 14267 / 71-m68</strain>
    </source>
</reference>
<sequence>MDTFTALTADEERFERHLAEQVWANSKVARAKFRRVAVAIYLLGAAMLSSGAAVLAYRL</sequence>
<organism>
    <name type="scientific">Micromonospora echinofusca</name>
    <dbReference type="NCBI Taxonomy" id="47858"/>
    <lineage>
        <taxon>Bacteria</taxon>
        <taxon>Bacillati</taxon>
        <taxon>Actinomycetota</taxon>
        <taxon>Actinomycetes</taxon>
        <taxon>Micromonosporales</taxon>
        <taxon>Micromonosporaceae</taxon>
        <taxon>Micromonospora</taxon>
    </lineage>
</organism>
<keyword id="KW-0051">Antiviral defense</keyword>
<keyword id="KW-1003">Cell membrane</keyword>
<keyword id="KW-0472">Membrane</keyword>
<keyword id="KW-0547">Nucleotide-binding</keyword>
<keyword id="KW-1185">Reference proteome</keyword>
<keyword id="KW-0812">Transmembrane</keyword>
<keyword id="KW-1133">Transmembrane helix</keyword>
<name>PCTM_MICEH</name>
<accession>A0A1C5G2D0</accession>
<proteinExistence type="inferred from homology"/>
<gene>
    <name evidence="2" type="primary">pycTM</name>
    <name evidence="3" type="ORF">GA0070610_0181</name>
</gene>
<evidence type="ECO:0000255" key="1"/>
<evidence type="ECO:0000303" key="2">
    <source>
    </source>
</evidence>
<evidence type="ECO:0000303" key="3">
    <source ref="1"/>
</evidence>
<evidence type="ECO:0000305" key="4"/>
<evidence type="ECO:0000305" key="5">
    <source>
    </source>
</evidence>
<comment type="function">
    <text evidence="5">Pycsar (pyrimidine cyclase system for antiphage resistance) provides immunity against bacteriophage. The pyrimidine cyclase (PycC) synthesizes cyclic nucleotides in response to infection; these serve as specific second messenger signals. The signals activate the adjacent effector, leading to bacterial cell death and abortive phage infection. A clade D Pycsar system.</text>
</comment>
<comment type="function">
    <text evidence="5">The effector gene of a two-gene Pycsar system. Expression of this and adjacent uridylate cyclase MePycC (AC A0A1C5G2V9) probably confers resistance to bacteriophage. The genes are probably only expressed in response to bacteriophage infection. Probably only responds to cUMP (produced by its cognate NTP cyclase), acts by impairing membrane integrity.</text>
</comment>
<comment type="subcellular location">
    <subcellularLocation>
        <location evidence="4">Cell membrane</location>
        <topology evidence="1">Single-pass membrane protein</topology>
    </subcellularLocation>
</comment>
<protein>
    <recommendedName>
        <fullName>Pycsar effector protein MePycTM</fullName>
        <shortName evidence="2">MePycTM</shortName>
    </recommendedName>
</protein>
<feature type="chain" id="PRO_0000455235" description="Pycsar effector protein MePycTM">
    <location>
        <begin position="1"/>
        <end position="59"/>
    </location>
</feature>
<feature type="transmembrane region" description="Helical" evidence="1">
    <location>
        <begin position="36"/>
        <end position="56"/>
    </location>
</feature>